<keyword id="KW-0325">Glycoprotein</keyword>
<keyword id="KW-1043">Host membrane</keyword>
<keyword id="KW-0472">Membrane</keyword>
<keyword id="KW-0812">Transmembrane</keyword>
<keyword id="KW-1133">Transmembrane helix</keyword>
<keyword id="KW-0946">Virion</keyword>
<sequence length="120" mass="13519">MGYTIQLDKDGDYYWDEDPTHHDPYMRANATSHAAASHAAASHAAASHAAAPHTAVHHAFHEPFIKLNLTDKNIFNGLGFILIVIFIYLLIITLQQMLTRHIYNTVQQCVKTHLDSKNLQ</sequence>
<organismHost>
    <name type="scientific">Ornithodoros</name>
    <name type="common">relapsing fever ticks</name>
    <dbReference type="NCBI Taxonomy" id="6937"/>
</organismHost>
<organismHost>
    <name type="scientific">Phacochoerus aethiopicus</name>
    <name type="common">Warthog</name>
    <dbReference type="NCBI Taxonomy" id="85517"/>
</organismHost>
<organismHost>
    <name type="scientific">Phacochoerus africanus</name>
    <name type="common">Warthog</name>
    <dbReference type="NCBI Taxonomy" id="41426"/>
</organismHost>
<organismHost>
    <name type="scientific">Potamochoerus larvatus</name>
    <name type="common">Bushpig</name>
    <dbReference type="NCBI Taxonomy" id="273792"/>
</organismHost>
<organismHost>
    <name type="scientific">Sus scrofa</name>
    <name type="common">Pig</name>
    <dbReference type="NCBI Taxonomy" id="9823"/>
</organismHost>
<protein>
    <recommendedName>
        <fullName>Uncharacterized protein B117L</fullName>
        <shortName>pB117L</shortName>
    </recommendedName>
</protein>
<comment type="subcellular location">
    <subcellularLocation>
        <location evidence="3">Host membrane</location>
        <topology evidence="3">Single-pass membrane protein</topology>
    </subcellularLocation>
    <subcellularLocation>
        <location evidence="1">Virion</location>
    </subcellularLocation>
</comment>
<comment type="similarity">
    <text evidence="3">Belongs to the asfivirus B117L family.</text>
</comment>
<reference key="1">
    <citation type="submission" date="2003-03" db="EMBL/GenBank/DDBJ databases">
        <title>African swine fever virus genomes.</title>
        <authorList>
            <person name="Kutish G.F."/>
            <person name="Rock D.L."/>
        </authorList>
    </citation>
    <scope>NUCLEOTIDE SEQUENCE [LARGE SCALE GENOMIC DNA]</scope>
</reference>
<reference key="2">
    <citation type="submission" date="2001-11" db="EMBL/GenBank/DDBJ databases">
        <title>Nucleotide sequence and analysis of 16.25 kilobase pairs of the African swine fever virus genome that span the central variable region.</title>
        <authorList>
            <person name="Roberts P.C."/>
            <person name="Lu Z."/>
            <person name="Rock D.L."/>
        </authorList>
    </citation>
    <scope>NUCLEOTIDE SEQUENCE [GENOMIC DNA]</scope>
</reference>
<organism>
    <name type="scientific">African swine fever virus (isolate Tick/Malawi/Lil 20-1/1983)</name>
    <name type="common">ASFV</name>
    <dbReference type="NCBI Taxonomy" id="10500"/>
    <lineage>
        <taxon>Viruses</taxon>
        <taxon>Varidnaviria</taxon>
        <taxon>Bamfordvirae</taxon>
        <taxon>Nucleocytoviricota</taxon>
        <taxon>Pokkesviricetes</taxon>
        <taxon>Asfuvirales</taxon>
        <taxon>Asfarviridae</taxon>
        <taxon>Asfivirus</taxon>
        <taxon>African swine fever virus</taxon>
    </lineage>
</organism>
<feature type="chain" id="PRO_0000373482" description="Uncharacterized protein B117L">
    <location>
        <begin position="1"/>
        <end position="120"/>
    </location>
</feature>
<feature type="transmembrane region" description="Helical" evidence="2">
    <location>
        <begin position="74"/>
        <end position="94"/>
    </location>
</feature>
<feature type="glycosylation site" description="N-linked (GlcNAc...) asparagine; by host" evidence="2">
    <location>
        <position position="29"/>
    </location>
</feature>
<feature type="glycosylation site" description="N-linked (GlcNAc...) asparagine; by host" evidence="2">
    <location>
        <position position="68"/>
    </location>
</feature>
<gene>
    <name type="ordered locus">Mal-091</name>
</gene>
<accession>Q8V9S1</accession>
<proteinExistence type="inferred from homology"/>
<name>VF117_ASFM2</name>
<evidence type="ECO:0000250" key="1">
    <source>
        <dbReference type="UniProtKB" id="Q65172"/>
    </source>
</evidence>
<evidence type="ECO:0000255" key="2"/>
<evidence type="ECO:0000305" key="3"/>
<dbReference type="EMBL" id="L00966">
    <property type="protein sequence ID" value="AAL31343.1"/>
    <property type="molecule type" value="Genomic_DNA"/>
</dbReference>
<dbReference type="SMR" id="Q8V9S1"/>
<dbReference type="GO" id="GO:0033644">
    <property type="term" value="C:host cell membrane"/>
    <property type="evidence" value="ECO:0007669"/>
    <property type="project" value="UniProtKB-SubCell"/>
</dbReference>
<dbReference type="GO" id="GO:0016020">
    <property type="term" value="C:membrane"/>
    <property type="evidence" value="ECO:0007669"/>
    <property type="project" value="UniProtKB-KW"/>
</dbReference>
<dbReference type="GO" id="GO:0044423">
    <property type="term" value="C:virion component"/>
    <property type="evidence" value="ECO:0007669"/>
    <property type="project" value="UniProtKB-KW"/>
</dbReference>